<evidence type="ECO:0000250" key="1">
    <source>
        <dbReference type="UniProtKB" id="O80852"/>
    </source>
</evidence>
<evidence type="ECO:0000255" key="2"/>
<evidence type="ECO:0000269" key="3">
    <source>
    </source>
</evidence>
<evidence type="ECO:0000269" key="4">
    <source>
    </source>
</evidence>
<evidence type="ECO:0000269" key="5">
    <source>
    </source>
</evidence>
<evidence type="ECO:0000269" key="6">
    <source>
    </source>
</evidence>
<evidence type="ECO:0000303" key="7">
    <source>
    </source>
</evidence>
<evidence type="ECO:0000303" key="8">
    <source>
    </source>
</evidence>
<evidence type="ECO:0000305" key="9"/>
<evidence type="ECO:0000312" key="10">
    <source>
        <dbReference type="Araport" id="AT5G17220"/>
    </source>
</evidence>
<evidence type="ECO:0000312" key="11">
    <source>
        <dbReference type="EMBL" id="BAB10509.1"/>
    </source>
</evidence>
<keyword id="KW-0963">Cytoplasm</keyword>
<keyword id="KW-0216">Detoxification</keyword>
<keyword id="KW-1185">Reference proteome</keyword>
<keyword id="KW-0346">Stress response</keyword>
<keyword id="KW-0808">Transferase</keyword>
<accession>Q9FE46</accession>
<accession>Q5DWV6</accession>
<comment type="function">
    <text evidence="3 6">Involved in the transport and/or accumulation of both anthocyanins and proanthocyanidins (PA)s in the vacuole. Functions in the cytosol to maintain the regular accumulation in the vacuole of PA precursors, such as epicatechin and glycosylated epicatechin.</text>
</comment>
<comment type="catalytic activity">
    <reaction evidence="1">
        <text>RX + glutathione = an S-substituted glutathione + a halide anion + H(+)</text>
        <dbReference type="Rhea" id="RHEA:16437"/>
        <dbReference type="ChEBI" id="CHEBI:15378"/>
        <dbReference type="ChEBI" id="CHEBI:16042"/>
        <dbReference type="ChEBI" id="CHEBI:17792"/>
        <dbReference type="ChEBI" id="CHEBI:57925"/>
        <dbReference type="ChEBI" id="CHEBI:90779"/>
        <dbReference type="EC" id="2.5.1.18"/>
    </reaction>
</comment>
<comment type="subcellular location">
    <subcellularLocation>
        <location evidence="4">Cytoplasm</location>
        <location evidence="4">Cytosol</location>
    </subcellularLocation>
</comment>
<comment type="induction">
    <text evidence="5">By the fungal pathogen Verticillium dahliae.</text>
</comment>
<comment type="disruption phenotype">
    <text evidence="3 6">Great reduction of anthocyanin pigments in the vegetative parts and brown pigments in the seed coat. Accumulation of unextractable proanthocyanidins.</text>
</comment>
<comment type="similarity">
    <text evidence="9">Belongs to the GST superfamily. Phi family.</text>
</comment>
<proteinExistence type="evidence at protein level"/>
<reference key="1">
    <citation type="journal article" date="2002" name="Plant Mol. Biol.">
        <title>Probing the diversity of the Arabidopsis glutathione S-transferase gene family.</title>
        <authorList>
            <person name="Wagner U."/>
            <person name="Edwards R."/>
            <person name="Dixon D.P."/>
            <person name="Mauch F."/>
        </authorList>
    </citation>
    <scope>NUCLEOTIDE SEQUENCE [MRNA]</scope>
    <scope>GENE FAMILY</scope>
    <scope>NOMENCLATURE</scope>
    <source>
        <strain>cv. Columbia</strain>
    </source>
</reference>
<reference key="2">
    <citation type="journal article" date="2004" name="Plant J.">
        <title>TRANSPARENT TESTA 19 is involved in the accumulation of both anthocyanins and proanthocyanidins in Arabidopsis.</title>
        <authorList>
            <person name="Kitamura S."/>
            <person name="Shikazono N."/>
            <person name="Tanaka A."/>
        </authorList>
    </citation>
    <scope>NUCLEOTIDE SEQUENCE [GENOMIC DNA]</scope>
    <scope>FUNCTION</scope>
    <scope>DISRUPTION PHENOTYPE</scope>
</reference>
<reference key="3">
    <citation type="journal article" date="1997" name="DNA Res.">
        <title>Structural analysis of Arabidopsis thaliana chromosome 5. I. Sequence features of the 1.6 Mb regions covered by twenty physically assigned P1 clones.</title>
        <authorList>
            <person name="Sato S."/>
            <person name="Kotani H."/>
            <person name="Nakamura Y."/>
            <person name="Kaneko T."/>
            <person name="Asamizu E."/>
            <person name="Fukami M."/>
            <person name="Miyajima N."/>
            <person name="Tabata S."/>
        </authorList>
    </citation>
    <scope>NUCLEOTIDE SEQUENCE [LARGE SCALE GENOMIC DNA]</scope>
    <source>
        <strain>cv. Columbia</strain>
    </source>
</reference>
<reference key="4">
    <citation type="journal article" date="2017" name="Plant J.">
        <title>Araport11: a complete reannotation of the Arabidopsis thaliana reference genome.</title>
        <authorList>
            <person name="Cheng C.Y."/>
            <person name="Krishnakumar V."/>
            <person name="Chan A.P."/>
            <person name="Thibaud-Nissen F."/>
            <person name="Schobel S."/>
            <person name="Town C.D."/>
        </authorList>
    </citation>
    <scope>GENOME REANNOTATION</scope>
    <source>
        <strain>cv. Columbia</strain>
    </source>
</reference>
<reference key="5">
    <citation type="journal article" date="2010" name="Mol. Plant Pathol.">
        <title>Ethylene perception via ETR1 is required in Arabidopsis infection by Verticillium dahliae.</title>
        <authorList>
            <person name="Pantelides I.S."/>
            <person name="Tjamos S.E."/>
            <person name="Paplomatas E.J."/>
        </authorList>
    </citation>
    <scope>INDUCTION</scope>
</reference>
<reference key="6">
    <citation type="journal article" date="2010" name="Plant J.">
        <title>Metabolic profiling and cytological analysis of proanthocyanidins in immature seeds of Arabidopsis thaliana flavonoid accumulation mutants.</title>
        <authorList>
            <person name="Kitamura S."/>
            <person name="Matsuda F."/>
            <person name="Tohge T."/>
            <person name="Yonekura-Sakakibara K."/>
            <person name="Yamazaki M."/>
            <person name="Saito K."/>
            <person name="Narumi I."/>
        </authorList>
    </citation>
    <scope>SUBCELLULAR LOCATION</scope>
</reference>
<reference key="7">
    <citation type="journal article" date="2011" name="Plant Cell Environ.">
        <title>The Arabidopsis tt19-4 mutant differentially accumulates proanthocyanidin and anthocyanin through a 3' amino acid substitution in glutathione S-transferase.</title>
        <authorList>
            <person name="Li X."/>
            <person name="Gao P."/>
            <person name="Cui D."/>
            <person name="Wu L."/>
            <person name="Parkin I."/>
            <person name="Saberianfar R."/>
            <person name="Menassa R."/>
            <person name="Pan H."/>
            <person name="Westcott N."/>
            <person name="Gruber M.Y."/>
        </authorList>
    </citation>
    <scope>FUNCTION</scope>
    <scope>DISRUPTION PHENOTYPE</scope>
    <scope>MUTAGENESIS OF TRP-205</scope>
</reference>
<reference key="8">
    <citation type="journal article" date="2013" name="Plant Physiol. Biochem.">
        <title>The flavonoid biosynthetic pathway in Arabidopsis: Structural and genetic diversity.</title>
        <authorList>
            <person name="Saito K."/>
            <person name="Yonekura-Sakakibara K."/>
            <person name="Nakabayashi R."/>
            <person name="Higashi Y."/>
            <person name="Yamazaki M."/>
            <person name="Tohge T."/>
            <person name="Fernie A.R."/>
        </authorList>
    </citation>
    <scope>REVIEW</scope>
    <scope>NOMENCLATURE</scope>
</reference>
<gene>
    <name evidence="7" type="primary">GSTF12</name>
    <name evidence="7" type="synonym">GST26</name>
    <name evidence="8" type="synonym">TT19</name>
    <name evidence="10" type="ordered locus">At5g17220</name>
    <name evidence="11" type="ORF">MKP11.22</name>
</gene>
<protein>
    <recommendedName>
        <fullName evidence="7">Glutathione S-transferase F12</fullName>
        <shortName evidence="7">AtGSTF12</shortName>
        <ecNumber evidence="1">2.5.1.18</ecNumber>
    </recommendedName>
    <alternativeName>
        <fullName evidence="7">GST class-phi member 12</fullName>
    </alternativeName>
    <alternativeName>
        <fullName evidence="7">Glutathione S-transferase 26</fullName>
    </alternativeName>
    <alternativeName>
        <fullName evidence="8">Protein TRANSPARENT TESTA 19</fullName>
    </alternativeName>
</protein>
<name>GSTFC_ARATH</name>
<feature type="chain" id="PRO_0000413545" description="Glutathione S-transferase F12">
    <location>
        <begin position="1"/>
        <end position="214"/>
    </location>
</feature>
<feature type="domain" description="GST N-terminal" evidence="2">
    <location>
        <begin position="2"/>
        <end position="82"/>
    </location>
</feature>
<feature type="domain" description="GST C-terminal" evidence="2">
    <location>
        <begin position="89"/>
        <end position="214"/>
    </location>
</feature>
<feature type="binding site" evidence="1">
    <location>
        <begin position="11"/>
        <end position="12"/>
    </location>
    <ligand>
        <name>glutathione</name>
        <dbReference type="ChEBI" id="CHEBI:57925"/>
    </ligand>
</feature>
<feature type="binding site" evidence="1">
    <location>
        <begin position="40"/>
        <end position="41"/>
    </location>
    <ligand>
        <name>glutathione</name>
        <dbReference type="ChEBI" id="CHEBI:57925"/>
    </ligand>
</feature>
<feature type="binding site" evidence="1">
    <location>
        <begin position="53"/>
        <end position="54"/>
    </location>
    <ligand>
        <name>glutathione</name>
        <dbReference type="ChEBI" id="CHEBI:57925"/>
    </ligand>
</feature>
<feature type="binding site" evidence="1">
    <location>
        <begin position="66"/>
        <end position="67"/>
    </location>
    <ligand>
        <name>glutathione</name>
        <dbReference type="ChEBI" id="CHEBI:57925"/>
    </ligand>
</feature>
<feature type="mutagenesis site" description="In tt19-4; accumulation of unextractable proanthocyanidins." evidence="6">
    <original>W</original>
    <variation>L</variation>
    <location>
        <position position="205"/>
    </location>
</feature>
<feature type="sequence conflict" description="In Ref. 2; BAD89984." evidence="9" ref="2">
    <original>I</original>
    <variation>F</variation>
    <location>
        <position position="70"/>
    </location>
</feature>
<organism>
    <name type="scientific">Arabidopsis thaliana</name>
    <name type="common">Mouse-ear cress</name>
    <dbReference type="NCBI Taxonomy" id="3702"/>
    <lineage>
        <taxon>Eukaryota</taxon>
        <taxon>Viridiplantae</taxon>
        <taxon>Streptophyta</taxon>
        <taxon>Embryophyta</taxon>
        <taxon>Tracheophyta</taxon>
        <taxon>Spermatophyta</taxon>
        <taxon>Magnoliopsida</taxon>
        <taxon>eudicotyledons</taxon>
        <taxon>Gunneridae</taxon>
        <taxon>Pentapetalae</taxon>
        <taxon>rosids</taxon>
        <taxon>malvids</taxon>
        <taxon>Brassicales</taxon>
        <taxon>Brassicaceae</taxon>
        <taxon>Camelineae</taxon>
        <taxon>Arabidopsis</taxon>
    </lineage>
</organism>
<dbReference type="EC" id="2.5.1.18" evidence="1"/>
<dbReference type="EMBL" id="AF288189">
    <property type="protein sequence ID" value="AAG30138.1"/>
    <property type="molecule type" value="mRNA"/>
</dbReference>
<dbReference type="EMBL" id="AB117793">
    <property type="protein sequence ID" value="BAD89984.1"/>
    <property type="molecule type" value="Genomic_DNA"/>
</dbReference>
<dbReference type="EMBL" id="AB005238">
    <property type="protein sequence ID" value="BAB10509.1"/>
    <property type="molecule type" value="Genomic_DNA"/>
</dbReference>
<dbReference type="EMBL" id="CP002688">
    <property type="protein sequence ID" value="AED92398.1"/>
    <property type="molecule type" value="Genomic_DNA"/>
</dbReference>
<dbReference type="RefSeq" id="NP_197224.1">
    <property type="nucleotide sequence ID" value="NM_121728.4"/>
</dbReference>
<dbReference type="SMR" id="Q9FE46"/>
<dbReference type="FunCoup" id="Q9FE46">
    <property type="interactions" value="599"/>
</dbReference>
<dbReference type="STRING" id="3702.Q9FE46"/>
<dbReference type="PaxDb" id="3702-AT5G17220.1"/>
<dbReference type="ProteomicsDB" id="247258"/>
<dbReference type="EnsemblPlants" id="AT5G17220.1">
    <property type="protein sequence ID" value="AT5G17220.1"/>
    <property type="gene ID" value="AT5G17220"/>
</dbReference>
<dbReference type="GeneID" id="831586"/>
<dbReference type="Gramene" id="AT5G17220.1">
    <property type="protein sequence ID" value="AT5G17220.1"/>
    <property type="gene ID" value="AT5G17220"/>
</dbReference>
<dbReference type="KEGG" id="ath:AT5G17220"/>
<dbReference type="Araport" id="AT5G17220"/>
<dbReference type="TAIR" id="AT5G17220">
    <property type="gene designation" value="GSTF12"/>
</dbReference>
<dbReference type="eggNOG" id="KOG0867">
    <property type="taxonomic scope" value="Eukaryota"/>
</dbReference>
<dbReference type="HOGENOM" id="CLU_011226_5_1_1"/>
<dbReference type="InParanoid" id="Q9FE46"/>
<dbReference type="OMA" id="WASVEQN"/>
<dbReference type="PhylomeDB" id="Q9FE46"/>
<dbReference type="BioCyc" id="ARA:AT5G17220-MONOMER"/>
<dbReference type="PRO" id="PR:Q9FE46"/>
<dbReference type="Proteomes" id="UP000006548">
    <property type="component" value="Chromosome 5"/>
</dbReference>
<dbReference type="ExpressionAtlas" id="Q9FE46">
    <property type="expression patterns" value="baseline and differential"/>
</dbReference>
<dbReference type="GO" id="GO:0005737">
    <property type="term" value="C:cytoplasm"/>
    <property type="evidence" value="ECO:0000314"/>
    <property type="project" value="TAIR"/>
</dbReference>
<dbReference type="GO" id="GO:0005829">
    <property type="term" value="C:cytosol"/>
    <property type="evidence" value="ECO:0007669"/>
    <property type="project" value="UniProtKB-SubCell"/>
</dbReference>
<dbReference type="GO" id="GO:0005634">
    <property type="term" value="C:nucleus"/>
    <property type="evidence" value="ECO:0000314"/>
    <property type="project" value="TAIR"/>
</dbReference>
<dbReference type="GO" id="GO:0009705">
    <property type="term" value="C:plant-type vacuole membrane"/>
    <property type="evidence" value="ECO:0000314"/>
    <property type="project" value="TAIR"/>
</dbReference>
<dbReference type="GO" id="GO:0043169">
    <property type="term" value="F:cation binding"/>
    <property type="evidence" value="ECO:0000314"/>
    <property type="project" value="TAIR"/>
</dbReference>
<dbReference type="GO" id="GO:0004364">
    <property type="term" value="F:glutathione transferase activity"/>
    <property type="evidence" value="ECO:0007669"/>
    <property type="project" value="UniProtKB-EC"/>
</dbReference>
<dbReference type="GO" id="GO:0046283">
    <property type="term" value="P:anthocyanin-containing compound metabolic process"/>
    <property type="evidence" value="ECO:0000315"/>
    <property type="project" value="TAIR"/>
</dbReference>
<dbReference type="GO" id="GO:1900384">
    <property type="term" value="P:regulation of flavonol biosynthetic process"/>
    <property type="evidence" value="ECO:0000315"/>
    <property type="project" value="TAIR"/>
</dbReference>
<dbReference type="GO" id="GO:0009407">
    <property type="term" value="P:toxin catabolic process"/>
    <property type="evidence" value="ECO:0000304"/>
    <property type="project" value="TAIR"/>
</dbReference>
<dbReference type="CDD" id="cd03187">
    <property type="entry name" value="GST_C_Phi"/>
    <property type="match status" value="1"/>
</dbReference>
<dbReference type="CDD" id="cd03053">
    <property type="entry name" value="GST_N_Phi"/>
    <property type="match status" value="1"/>
</dbReference>
<dbReference type="FunFam" id="1.20.1050.10:FF:000004">
    <property type="entry name" value="Glutathione S-transferase F2"/>
    <property type="match status" value="1"/>
</dbReference>
<dbReference type="FunFam" id="3.40.30.10:FF:000016">
    <property type="entry name" value="Glutathione S-transferase F2"/>
    <property type="match status" value="1"/>
</dbReference>
<dbReference type="Gene3D" id="1.20.1050.10">
    <property type="match status" value="1"/>
</dbReference>
<dbReference type="Gene3D" id="3.40.30.10">
    <property type="entry name" value="Glutaredoxin"/>
    <property type="match status" value="1"/>
</dbReference>
<dbReference type="InterPro" id="IPR010987">
    <property type="entry name" value="Glutathione-S-Trfase_C-like"/>
</dbReference>
<dbReference type="InterPro" id="IPR036282">
    <property type="entry name" value="Glutathione-S-Trfase_C_sf"/>
</dbReference>
<dbReference type="InterPro" id="IPR040079">
    <property type="entry name" value="Glutathione_S-Trfase"/>
</dbReference>
<dbReference type="InterPro" id="IPR004045">
    <property type="entry name" value="Glutathione_S-Trfase_N"/>
</dbReference>
<dbReference type="InterPro" id="IPR004046">
    <property type="entry name" value="GST_C"/>
</dbReference>
<dbReference type="InterPro" id="IPR034347">
    <property type="entry name" value="GST_Phi_C"/>
</dbReference>
<dbReference type="InterPro" id="IPR036249">
    <property type="entry name" value="Thioredoxin-like_sf"/>
</dbReference>
<dbReference type="PANTHER" id="PTHR43900:SF54">
    <property type="entry name" value="GLUTATHIONE S-TRANSFERASE F12"/>
    <property type="match status" value="1"/>
</dbReference>
<dbReference type="PANTHER" id="PTHR43900">
    <property type="entry name" value="GLUTATHIONE S-TRANSFERASE RHO"/>
    <property type="match status" value="1"/>
</dbReference>
<dbReference type="Pfam" id="PF00043">
    <property type="entry name" value="GST_C"/>
    <property type="match status" value="1"/>
</dbReference>
<dbReference type="Pfam" id="PF02798">
    <property type="entry name" value="GST_N"/>
    <property type="match status" value="1"/>
</dbReference>
<dbReference type="SFLD" id="SFLDS00019">
    <property type="entry name" value="Glutathione_Transferase_(cytos"/>
    <property type="match status" value="1"/>
</dbReference>
<dbReference type="SFLD" id="SFLDG00358">
    <property type="entry name" value="Main_(cytGST)"/>
    <property type="match status" value="1"/>
</dbReference>
<dbReference type="SUPFAM" id="SSF47616">
    <property type="entry name" value="GST C-terminal domain-like"/>
    <property type="match status" value="1"/>
</dbReference>
<dbReference type="SUPFAM" id="SSF52833">
    <property type="entry name" value="Thioredoxin-like"/>
    <property type="match status" value="1"/>
</dbReference>
<dbReference type="PROSITE" id="PS50405">
    <property type="entry name" value="GST_CTER"/>
    <property type="match status" value="1"/>
</dbReference>
<dbReference type="PROSITE" id="PS50404">
    <property type="entry name" value="GST_NTER"/>
    <property type="match status" value="1"/>
</dbReference>
<sequence>MVVKLYGQVTAACPQRVLLCFLEKGIEFEIIHIDLDTFEQKKPEHLLRQPFGQVPAIEDGDFKLFESRAIARYYATKFADQGTNLLGKSLEHRAIVDQWADVETYYFNVLAQPLVINLIIKPRLGEKCDVVLVEDLKVKLGVVLDIYNNRLSSNRFLAGEEFTMADLTHMPAMGYLMSITDINQMVKARGSFNRWWEEISDRPSWKKLMVLAGH</sequence>